<proteinExistence type="inferred from homology"/>
<name>EFTU_CHLTE</name>
<reference key="1">
    <citation type="journal article" date="2002" name="Proc. Natl. Acad. Sci. U.S.A.">
        <title>The complete genome sequence of Chlorobium tepidum TLS, a photosynthetic, anaerobic, green-sulfur bacterium.</title>
        <authorList>
            <person name="Eisen J.A."/>
            <person name="Nelson K.E."/>
            <person name="Paulsen I.T."/>
            <person name="Heidelberg J.F."/>
            <person name="Wu M."/>
            <person name="Dodson R.J."/>
            <person name="DeBoy R.T."/>
            <person name="Gwinn M.L."/>
            <person name="Nelson W.C."/>
            <person name="Haft D.H."/>
            <person name="Hickey E.K."/>
            <person name="Peterson J.D."/>
            <person name="Durkin A.S."/>
            <person name="Kolonay J.F."/>
            <person name="Yang F."/>
            <person name="Holt I.E."/>
            <person name="Umayam L.A."/>
            <person name="Mason T.M."/>
            <person name="Brenner M."/>
            <person name="Shea T.P."/>
            <person name="Parksey D.S."/>
            <person name="Nierman W.C."/>
            <person name="Feldblyum T.V."/>
            <person name="Hansen C.L."/>
            <person name="Craven M.B."/>
            <person name="Radune D."/>
            <person name="Vamathevan J.J."/>
            <person name="Khouri H.M."/>
            <person name="White O."/>
            <person name="Gruber T.M."/>
            <person name="Ketchum K.A."/>
            <person name="Venter J.C."/>
            <person name="Tettelin H."/>
            <person name="Bryant D.A."/>
            <person name="Fraser C.M."/>
        </authorList>
    </citation>
    <scope>NUCLEOTIDE SEQUENCE [LARGE SCALE GENOMIC DNA]</scope>
    <source>
        <strain>ATCC 49652 / DSM 12025 / NBRC 103806 / TLS</strain>
    </source>
</reference>
<feature type="chain" id="PRO_0000091310" description="Elongation factor Tu">
    <location>
        <begin position="1"/>
        <end position="393"/>
    </location>
</feature>
<feature type="domain" description="tr-type G">
    <location>
        <begin position="10"/>
        <end position="203"/>
    </location>
</feature>
<feature type="region of interest" description="G1" evidence="1">
    <location>
        <begin position="19"/>
        <end position="26"/>
    </location>
</feature>
<feature type="region of interest" description="G2" evidence="1">
    <location>
        <begin position="60"/>
        <end position="64"/>
    </location>
</feature>
<feature type="region of interest" description="G3" evidence="1">
    <location>
        <begin position="81"/>
        <end position="84"/>
    </location>
</feature>
<feature type="region of interest" description="G4" evidence="1">
    <location>
        <begin position="136"/>
        <end position="139"/>
    </location>
</feature>
<feature type="region of interest" description="G5" evidence="1">
    <location>
        <begin position="173"/>
        <end position="175"/>
    </location>
</feature>
<feature type="binding site" evidence="2">
    <location>
        <begin position="19"/>
        <end position="26"/>
    </location>
    <ligand>
        <name>GTP</name>
        <dbReference type="ChEBI" id="CHEBI:37565"/>
    </ligand>
</feature>
<feature type="binding site" evidence="2">
    <location>
        <position position="26"/>
    </location>
    <ligand>
        <name>Mg(2+)</name>
        <dbReference type="ChEBI" id="CHEBI:18420"/>
    </ligand>
</feature>
<feature type="binding site" evidence="2">
    <location>
        <begin position="81"/>
        <end position="85"/>
    </location>
    <ligand>
        <name>GTP</name>
        <dbReference type="ChEBI" id="CHEBI:37565"/>
    </ligand>
</feature>
<feature type="binding site" evidence="2">
    <location>
        <begin position="136"/>
        <end position="139"/>
    </location>
    <ligand>
        <name>GTP</name>
        <dbReference type="ChEBI" id="CHEBI:37565"/>
    </ligand>
</feature>
<comment type="function">
    <text evidence="2">GTP hydrolase that promotes the GTP-dependent binding of aminoacyl-tRNA to the A-site of ribosomes during protein biosynthesis.</text>
</comment>
<comment type="catalytic activity">
    <reaction evidence="2">
        <text>GTP + H2O = GDP + phosphate + H(+)</text>
        <dbReference type="Rhea" id="RHEA:19669"/>
        <dbReference type="ChEBI" id="CHEBI:15377"/>
        <dbReference type="ChEBI" id="CHEBI:15378"/>
        <dbReference type="ChEBI" id="CHEBI:37565"/>
        <dbReference type="ChEBI" id="CHEBI:43474"/>
        <dbReference type="ChEBI" id="CHEBI:58189"/>
        <dbReference type="EC" id="3.6.5.3"/>
    </reaction>
    <physiologicalReaction direction="left-to-right" evidence="2">
        <dbReference type="Rhea" id="RHEA:19670"/>
    </physiologicalReaction>
</comment>
<comment type="subunit">
    <text evidence="2">Monomer.</text>
</comment>
<comment type="subcellular location">
    <subcellularLocation>
        <location evidence="2">Cytoplasm</location>
    </subcellularLocation>
</comment>
<comment type="similarity">
    <text evidence="2">Belongs to the TRAFAC class translation factor GTPase superfamily. Classic translation factor GTPase family. EF-Tu/EF-1A subfamily.</text>
</comment>
<keyword id="KW-0963">Cytoplasm</keyword>
<keyword id="KW-0251">Elongation factor</keyword>
<keyword id="KW-0342">GTP-binding</keyword>
<keyword id="KW-0378">Hydrolase</keyword>
<keyword id="KW-0460">Magnesium</keyword>
<keyword id="KW-0479">Metal-binding</keyword>
<keyword id="KW-0547">Nucleotide-binding</keyword>
<keyword id="KW-0648">Protein biosynthesis</keyword>
<keyword id="KW-1185">Reference proteome</keyword>
<sequence length="393" mass="42899">MAKESYKRDKPHVNIGTIGHVDHGKTTLTAAITSVLAKQGMATLREFSDIDKAPEERERGITISTAHVEYQTAKRHYAHIDCPGHADYIKNMITGAAQMDGAILVVAGTDGPMPQTREHILLARQVNVPALVVFLNKVDIADPELLELVEMELRELLTEYGFPGDDIPIIKGSALKALEGDPEAEKQIMELMDAVDSYIPQPVRDIDKPFLMPVEDVFSISGRGTVGTGRIERGRIKVGDEVEIVGIKPTAKSVVTGIEMFQKTLDEGQAGDNAGLLLRGVDKNALERGMVIAKPGSITPHTKFKAEVYILKKEEGGRHTPFFNGYRPQFYFRTTDVTGSVTLPEGVEMVMPGDNLSIDVELIAPIAMEESLRFAIREGGRTVGAGSVTKIVE</sequence>
<organism>
    <name type="scientific">Chlorobaculum tepidum (strain ATCC 49652 / DSM 12025 / NBRC 103806 / TLS)</name>
    <name type="common">Chlorobium tepidum</name>
    <dbReference type="NCBI Taxonomy" id="194439"/>
    <lineage>
        <taxon>Bacteria</taxon>
        <taxon>Pseudomonadati</taxon>
        <taxon>Chlorobiota</taxon>
        <taxon>Chlorobiia</taxon>
        <taxon>Chlorobiales</taxon>
        <taxon>Chlorobiaceae</taxon>
        <taxon>Chlorobaculum</taxon>
    </lineage>
</organism>
<gene>
    <name evidence="2" type="primary">tuf</name>
    <name type="ordered locus">CT2191</name>
</gene>
<evidence type="ECO:0000250" key="1"/>
<evidence type="ECO:0000255" key="2">
    <source>
        <dbReference type="HAMAP-Rule" id="MF_00118"/>
    </source>
</evidence>
<protein>
    <recommendedName>
        <fullName evidence="2">Elongation factor Tu</fullName>
        <shortName evidence="2">EF-Tu</shortName>
        <ecNumber evidence="2">3.6.5.3</ecNumber>
    </recommendedName>
</protein>
<accession>Q8KAH0</accession>
<dbReference type="EC" id="3.6.5.3" evidence="2"/>
<dbReference type="EMBL" id="AE006470">
    <property type="protein sequence ID" value="AAM73407.1"/>
    <property type="molecule type" value="Genomic_DNA"/>
</dbReference>
<dbReference type="RefSeq" id="NP_663065.1">
    <property type="nucleotide sequence ID" value="NC_002932.3"/>
</dbReference>
<dbReference type="RefSeq" id="WP_010933844.1">
    <property type="nucleotide sequence ID" value="NC_002932.3"/>
</dbReference>
<dbReference type="SMR" id="Q8KAH0"/>
<dbReference type="STRING" id="194439.CT2191"/>
<dbReference type="EnsemblBacteria" id="AAM73407">
    <property type="protein sequence ID" value="AAM73407"/>
    <property type="gene ID" value="CT2191"/>
</dbReference>
<dbReference type="KEGG" id="cte:CT2191"/>
<dbReference type="PATRIC" id="fig|194439.7.peg.1990"/>
<dbReference type="eggNOG" id="COG0050">
    <property type="taxonomic scope" value="Bacteria"/>
</dbReference>
<dbReference type="HOGENOM" id="CLU_007265_0_0_10"/>
<dbReference type="OrthoDB" id="9804504at2"/>
<dbReference type="Proteomes" id="UP000001007">
    <property type="component" value="Chromosome"/>
</dbReference>
<dbReference type="GO" id="GO:0005829">
    <property type="term" value="C:cytosol"/>
    <property type="evidence" value="ECO:0007669"/>
    <property type="project" value="TreeGrafter"/>
</dbReference>
<dbReference type="GO" id="GO:0005525">
    <property type="term" value="F:GTP binding"/>
    <property type="evidence" value="ECO:0007669"/>
    <property type="project" value="UniProtKB-UniRule"/>
</dbReference>
<dbReference type="GO" id="GO:0003924">
    <property type="term" value="F:GTPase activity"/>
    <property type="evidence" value="ECO:0007669"/>
    <property type="project" value="InterPro"/>
</dbReference>
<dbReference type="GO" id="GO:0003746">
    <property type="term" value="F:translation elongation factor activity"/>
    <property type="evidence" value="ECO:0007669"/>
    <property type="project" value="UniProtKB-UniRule"/>
</dbReference>
<dbReference type="CDD" id="cd01884">
    <property type="entry name" value="EF_Tu"/>
    <property type="match status" value="1"/>
</dbReference>
<dbReference type="CDD" id="cd03697">
    <property type="entry name" value="EFTU_II"/>
    <property type="match status" value="1"/>
</dbReference>
<dbReference type="CDD" id="cd03707">
    <property type="entry name" value="EFTU_III"/>
    <property type="match status" value="1"/>
</dbReference>
<dbReference type="FunFam" id="2.40.30.10:FF:000001">
    <property type="entry name" value="Elongation factor Tu"/>
    <property type="match status" value="1"/>
</dbReference>
<dbReference type="FunFam" id="3.40.50.300:FF:000003">
    <property type="entry name" value="Elongation factor Tu"/>
    <property type="match status" value="1"/>
</dbReference>
<dbReference type="Gene3D" id="3.40.50.300">
    <property type="entry name" value="P-loop containing nucleotide triphosphate hydrolases"/>
    <property type="match status" value="1"/>
</dbReference>
<dbReference type="Gene3D" id="2.40.30.10">
    <property type="entry name" value="Translation factors"/>
    <property type="match status" value="2"/>
</dbReference>
<dbReference type="HAMAP" id="MF_00118_B">
    <property type="entry name" value="EF_Tu_B"/>
    <property type="match status" value="1"/>
</dbReference>
<dbReference type="InterPro" id="IPR041709">
    <property type="entry name" value="EF-Tu_GTP-bd"/>
</dbReference>
<dbReference type="InterPro" id="IPR050055">
    <property type="entry name" value="EF-Tu_GTPase"/>
</dbReference>
<dbReference type="InterPro" id="IPR004161">
    <property type="entry name" value="EFTu-like_2"/>
</dbReference>
<dbReference type="InterPro" id="IPR033720">
    <property type="entry name" value="EFTU_2"/>
</dbReference>
<dbReference type="InterPro" id="IPR031157">
    <property type="entry name" value="G_TR_CS"/>
</dbReference>
<dbReference type="InterPro" id="IPR027417">
    <property type="entry name" value="P-loop_NTPase"/>
</dbReference>
<dbReference type="InterPro" id="IPR005225">
    <property type="entry name" value="Small_GTP-bd"/>
</dbReference>
<dbReference type="InterPro" id="IPR000795">
    <property type="entry name" value="T_Tr_GTP-bd_dom"/>
</dbReference>
<dbReference type="InterPro" id="IPR009000">
    <property type="entry name" value="Transl_B-barrel_sf"/>
</dbReference>
<dbReference type="InterPro" id="IPR009001">
    <property type="entry name" value="Transl_elong_EF1A/Init_IF2_C"/>
</dbReference>
<dbReference type="InterPro" id="IPR004541">
    <property type="entry name" value="Transl_elong_EFTu/EF1A_bac/org"/>
</dbReference>
<dbReference type="InterPro" id="IPR004160">
    <property type="entry name" value="Transl_elong_EFTu/EF1A_C"/>
</dbReference>
<dbReference type="NCBIfam" id="TIGR00485">
    <property type="entry name" value="EF-Tu"/>
    <property type="match status" value="1"/>
</dbReference>
<dbReference type="NCBIfam" id="NF000766">
    <property type="entry name" value="PRK00049.1"/>
    <property type="match status" value="1"/>
</dbReference>
<dbReference type="NCBIfam" id="NF009372">
    <property type="entry name" value="PRK12735.1"/>
    <property type="match status" value="1"/>
</dbReference>
<dbReference type="NCBIfam" id="NF009373">
    <property type="entry name" value="PRK12736.1"/>
    <property type="match status" value="1"/>
</dbReference>
<dbReference type="NCBIfam" id="TIGR00231">
    <property type="entry name" value="small_GTP"/>
    <property type="match status" value="1"/>
</dbReference>
<dbReference type="PANTHER" id="PTHR43721:SF22">
    <property type="entry name" value="ELONGATION FACTOR TU, MITOCHONDRIAL"/>
    <property type="match status" value="1"/>
</dbReference>
<dbReference type="PANTHER" id="PTHR43721">
    <property type="entry name" value="ELONGATION FACTOR TU-RELATED"/>
    <property type="match status" value="1"/>
</dbReference>
<dbReference type="Pfam" id="PF00009">
    <property type="entry name" value="GTP_EFTU"/>
    <property type="match status" value="1"/>
</dbReference>
<dbReference type="Pfam" id="PF03144">
    <property type="entry name" value="GTP_EFTU_D2"/>
    <property type="match status" value="1"/>
</dbReference>
<dbReference type="Pfam" id="PF03143">
    <property type="entry name" value="GTP_EFTU_D3"/>
    <property type="match status" value="1"/>
</dbReference>
<dbReference type="PRINTS" id="PR00315">
    <property type="entry name" value="ELONGATNFCT"/>
</dbReference>
<dbReference type="SUPFAM" id="SSF50465">
    <property type="entry name" value="EF-Tu/eEF-1alpha/eIF2-gamma C-terminal domain"/>
    <property type="match status" value="1"/>
</dbReference>
<dbReference type="SUPFAM" id="SSF52540">
    <property type="entry name" value="P-loop containing nucleoside triphosphate hydrolases"/>
    <property type="match status" value="1"/>
</dbReference>
<dbReference type="SUPFAM" id="SSF50447">
    <property type="entry name" value="Translation proteins"/>
    <property type="match status" value="1"/>
</dbReference>
<dbReference type="PROSITE" id="PS00301">
    <property type="entry name" value="G_TR_1"/>
    <property type="match status" value="1"/>
</dbReference>
<dbReference type="PROSITE" id="PS51722">
    <property type="entry name" value="G_TR_2"/>
    <property type="match status" value="1"/>
</dbReference>